<reference key="1">
    <citation type="submission" date="2007-11" db="EMBL/GenBank/DDBJ databases">
        <title>Complete sequence of Petroga mobilis SJ95.</title>
        <authorList>
            <consortium name="US DOE Joint Genome Institute"/>
            <person name="Copeland A."/>
            <person name="Lucas S."/>
            <person name="Lapidus A."/>
            <person name="Barry K."/>
            <person name="Glavina del Rio T."/>
            <person name="Dalin E."/>
            <person name="Tice H."/>
            <person name="Pitluck S."/>
            <person name="Meincke L."/>
            <person name="Brettin T."/>
            <person name="Bruce D."/>
            <person name="Detter J.C."/>
            <person name="Han C."/>
            <person name="Kuske C.R."/>
            <person name="Schmutz J."/>
            <person name="Larimer F."/>
            <person name="Land M."/>
            <person name="Hauser L."/>
            <person name="Kyrpides N."/>
            <person name="Mikhailova N."/>
            <person name="Noll K."/>
            <person name="Richardson P."/>
        </authorList>
    </citation>
    <scope>NUCLEOTIDE SEQUENCE [LARGE SCALE GENOMIC DNA]</scope>
    <source>
        <strain>DSM 10674 / SJ95</strain>
    </source>
</reference>
<name>Y154_PETMO</name>
<evidence type="ECO:0000255" key="1">
    <source>
        <dbReference type="HAMAP-Rule" id="MF_00636"/>
    </source>
</evidence>
<feature type="chain" id="PRO_0000383277" description="Nucleotide-binding protein Pmob_0154">
    <location>
        <begin position="1"/>
        <end position="287"/>
    </location>
</feature>
<feature type="binding site" evidence="1">
    <location>
        <begin position="15"/>
        <end position="22"/>
    </location>
    <ligand>
        <name>ATP</name>
        <dbReference type="ChEBI" id="CHEBI:30616"/>
    </ligand>
</feature>
<feature type="binding site" evidence="1">
    <location>
        <begin position="64"/>
        <end position="67"/>
    </location>
    <ligand>
        <name>GTP</name>
        <dbReference type="ChEBI" id="CHEBI:37565"/>
    </ligand>
</feature>
<organism>
    <name type="scientific">Petrotoga mobilis (strain DSM 10674 / SJ95)</name>
    <dbReference type="NCBI Taxonomy" id="403833"/>
    <lineage>
        <taxon>Bacteria</taxon>
        <taxon>Thermotogati</taxon>
        <taxon>Thermotogota</taxon>
        <taxon>Thermotogae</taxon>
        <taxon>Petrotogales</taxon>
        <taxon>Petrotogaceae</taxon>
        <taxon>Petrotoga</taxon>
    </lineage>
</organism>
<comment type="function">
    <text evidence="1">Displays ATPase and GTPase activities.</text>
</comment>
<comment type="similarity">
    <text evidence="1">Belongs to the RapZ-like family.</text>
</comment>
<dbReference type="EMBL" id="CP000879">
    <property type="protein sequence ID" value="ABX30901.1"/>
    <property type="molecule type" value="Genomic_DNA"/>
</dbReference>
<dbReference type="SMR" id="A9BFB6"/>
<dbReference type="STRING" id="403833.Pmob_0154"/>
<dbReference type="KEGG" id="pmo:Pmob_0154"/>
<dbReference type="eggNOG" id="COG1660">
    <property type="taxonomic scope" value="Bacteria"/>
</dbReference>
<dbReference type="HOGENOM" id="CLU_059558_1_1_0"/>
<dbReference type="Proteomes" id="UP000000789">
    <property type="component" value="Chromosome"/>
</dbReference>
<dbReference type="GO" id="GO:0005524">
    <property type="term" value="F:ATP binding"/>
    <property type="evidence" value="ECO:0007669"/>
    <property type="project" value="UniProtKB-UniRule"/>
</dbReference>
<dbReference type="GO" id="GO:0005525">
    <property type="term" value="F:GTP binding"/>
    <property type="evidence" value="ECO:0007669"/>
    <property type="project" value="UniProtKB-UniRule"/>
</dbReference>
<dbReference type="Gene3D" id="3.40.50.300">
    <property type="entry name" value="P-loop containing nucleotide triphosphate hydrolases"/>
    <property type="match status" value="1"/>
</dbReference>
<dbReference type="HAMAP" id="MF_00636">
    <property type="entry name" value="RapZ_like"/>
    <property type="match status" value="1"/>
</dbReference>
<dbReference type="InterPro" id="IPR027417">
    <property type="entry name" value="P-loop_NTPase"/>
</dbReference>
<dbReference type="InterPro" id="IPR005337">
    <property type="entry name" value="RapZ-like"/>
</dbReference>
<dbReference type="InterPro" id="IPR053930">
    <property type="entry name" value="RapZ-like_N"/>
</dbReference>
<dbReference type="InterPro" id="IPR053931">
    <property type="entry name" value="RapZ_C"/>
</dbReference>
<dbReference type="NCBIfam" id="NF003828">
    <property type="entry name" value="PRK05416.1"/>
    <property type="match status" value="1"/>
</dbReference>
<dbReference type="PANTHER" id="PTHR30448">
    <property type="entry name" value="RNASE ADAPTER PROTEIN RAPZ"/>
    <property type="match status" value="1"/>
</dbReference>
<dbReference type="PANTHER" id="PTHR30448:SF0">
    <property type="entry name" value="RNASE ADAPTER PROTEIN RAPZ"/>
    <property type="match status" value="1"/>
</dbReference>
<dbReference type="Pfam" id="PF22740">
    <property type="entry name" value="PapZ_C"/>
    <property type="match status" value="1"/>
</dbReference>
<dbReference type="Pfam" id="PF03668">
    <property type="entry name" value="RapZ-like_N"/>
    <property type="match status" value="1"/>
</dbReference>
<dbReference type="PIRSF" id="PIRSF005052">
    <property type="entry name" value="P-loopkin"/>
    <property type="match status" value="1"/>
</dbReference>
<dbReference type="SUPFAM" id="SSF52540">
    <property type="entry name" value="P-loop containing nucleoside triphosphate hydrolases"/>
    <property type="match status" value="2"/>
</dbReference>
<keyword id="KW-0067">ATP-binding</keyword>
<keyword id="KW-0342">GTP-binding</keyword>
<keyword id="KW-0547">Nucleotide-binding</keyword>
<protein>
    <recommendedName>
        <fullName evidence="1">Nucleotide-binding protein Pmob_0154</fullName>
    </recommendedName>
</protein>
<accession>A9BFB6</accession>
<gene>
    <name type="ordered locus">Pmob_0154</name>
</gene>
<proteinExistence type="inferred from homology"/>
<sequence length="287" mass="33224">MITLLTKPTVFLITGLSGAGKTLLLQSLEDEGYYTVDNIPPHLIESFLNILCTSNVKKLAIVSDIRWKDPQKLIELFKNVESLAKCTMEIHKVFLKADKSELINRYKKTRRTHPLGLSLENAIDEEIKVMSEIESSCDIVIDTSSTEPTEFKKRFFQMIKEDMKKLKLNFISFGFKNGIPPISDYVFDVRYLPNPFYFPEMYELTGLDMKVMEFLEKFKETHETVDKIANLAKFIQDKYSESGRIEAYFCIGCTGGQHRSVYIAQKVYEILKKEGREVSIDHRDIER</sequence>